<protein>
    <recommendedName>
        <fullName>Cytochrome b</fullName>
    </recommendedName>
    <alternativeName>
        <fullName>Complex III subunit 3</fullName>
    </alternativeName>
    <alternativeName>
        <fullName>Complex III subunit III</fullName>
    </alternativeName>
    <alternativeName>
        <fullName>Cytochrome b-c1 complex subunit 3</fullName>
    </alternativeName>
    <alternativeName>
        <fullName>Ubiquinol-cytochrome-c reductase complex cytochrome b subunit</fullName>
    </alternativeName>
</protein>
<sequence>MANIRKSHPLLKIINQSLIDLPAPSNISTWWNFGSLLGICLGLQILTGLFLAMHYTSDTLTAFSSVTHICRDVNYGWIIRYIHANGASMFFICLFLHVGRGIYYGSYNYLETWNIGIILLFAVMATAFMGYVLPWGQMSFWGATVITNLLSAIPYVGTSLVEWIWGGFSVDKATLTRFFAFHFILPFIITALVIVHLLFLHETGSNNPTGLNSNADKIPFHPYYTIKDILGFIIMFLFLMILVLFTPDMLGDPDNYTPANPLNTPPHIKPEWYFLFAYAILRSIPNKLGGVLALILSILILILMPLLHTSAQRSLMFRPIGQCLFWILVGDLFILTWIGGQPVEHPFIIIGQLASIMYFLIILVLMPLAGILENKIMKL</sequence>
<proteinExistence type="inferred from homology"/>
<organism>
    <name type="scientific">Myospalax psilurus</name>
    <name type="common">Transbaikal zokor</name>
    <name type="synonym">Myospalax epsilanus</name>
    <dbReference type="NCBI Taxonomy" id="146129"/>
    <lineage>
        <taxon>Eukaryota</taxon>
        <taxon>Metazoa</taxon>
        <taxon>Chordata</taxon>
        <taxon>Craniata</taxon>
        <taxon>Vertebrata</taxon>
        <taxon>Euteleostomi</taxon>
        <taxon>Mammalia</taxon>
        <taxon>Eutheria</taxon>
        <taxon>Euarchontoglires</taxon>
        <taxon>Glires</taxon>
        <taxon>Rodentia</taxon>
        <taxon>Myomorpha</taxon>
        <taxon>Muroidea</taxon>
        <taxon>Spalacidae</taxon>
        <taxon>Myospalacinae</taxon>
        <taxon>Myospalax</taxon>
    </lineage>
</organism>
<keyword id="KW-0249">Electron transport</keyword>
<keyword id="KW-0349">Heme</keyword>
<keyword id="KW-0408">Iron</keyword>
<keyword id="KW-0472">Membrane</keyword>
<keyword id="KW-0479">Metal-binding</keyword>
<keyword id="KW-0496">Mitochondrion</keyword>
<keyword id="KW-0999">Mitochondrion inner membrane</keyword>
<keyword id="KW-0679">Respiratory chain</keyword>
<keyword id="KW-0812">Transmembrane</keyword>
<keyword id="KW-1133">Transmembrane helix</keyword>
<keyword id="KW-0813">Transport</keyword>
<keyword id="KW-0830">Ubiquinone</keyword>
<dbReference type="EMBL" id="AF326270">
    <property type="protein sequence ID" value="AAG48722.1"/>
    <property type="molecule type" value="Genomic_DNA"/>
</dbReference>
<dbReference type="EMBL" id="AF326271">
    <property type="protein sequence ID" value="AAG48723.1"/>
    <property type="molecule type" value="Genomic_DNA"/>
</dbReference>
<dbReference type="SMR" id="Q9G3N1"/>
<dbReference type="GO" id="GO:0005743">
    <property type="term" value="C:mitochondrial inner membrane"/>
    <property type="evidence" value="ECO:0007669"/>
    <property type="project" value="UniProtKB-SubCell"/>
</dbReference>
<dbReference type="GO" id="GO:0045275">
    <property type="term" value="C:respiratory chain complex III"/>
    <property type="evidence" value="ECO:0007669"/>
    <property type="project" value="InterPro"/>
</dbReference>
<dbReference type="GO" id="GO:0046872">
    <property type="term" value="F:metal ion binding"/>
    <property type="evidence" value="ECO:0007669"/>
    <property type="project" value="UniProtKB-KW"/>
</dbReference>
<dbReference type="GO" id="GO:0008121">
    <property type="term" value="F:ubiquinol-cytochrome-c reductase activity"/>
    <property type="evidence" value="ECO:0007669"/>
    <property type="project" value="InterPro"/>
</dbReference>
<dbReference type="GO" id="GO:0006122">
    <property type="term" value="P:mitochondrial electron transport, ubiquinol to cytochrome c"/>
    <property type="evidence" value="ECO:0007669"/>
    <property type="project" value="TreeGrafter"/>
</dbReference>
<dbReference type="CDD" id="cd00290">
    <property type="entry name" value="cytochrome_b_C"/>
    <property type="match status" value="1"/>
</dbReference>
<dbReference type="CDD" id="cd00284">
    <property type="entry name" value="Cytochrome_b_N"/>
    <property type="match status" value="1"/>
</dbReference>
<dbReference type="FunFam" id="1.20.810.10:FF:000002">
    <property type="entry name" value="Cytochrome b"/>
    <property type="match status" value="1"/>
</dbReference>
<dbReference type="Gene3D" id="1.20.810.10">
    <property type="entry name" value="Cytochrome Bc1 Complex, Chain C"/>
    <property type="match status" value="1"/>
</dbReference>
<dbReference type="InterPro" id="IPR005798">
    <property type="entry name" value="Cyt_b/b6_C"/>
</dbReference>
<dbReference type="InterPro" id="IPR036150">
    <property type="entry name" value="Cyt_b/b6_C_sf"/>
</dbReference>
<dbReference type="InterPro" id="IPR005797">
    <property type="entry name" value="Cyt_b/b6_N"/>
</dbReference>
<dbReference type="InterPro" id="IPR027387">
    <property type="entry name" value="Cytb/b6-like_sf"/>
</dbReference>
<dbReference type="InterPro" id="IPR030689">
    <property type="entry name" value="Cytochrome_b"/>
</dbReference>
<dbReference type="InterPro" id="IPR048260">
    <property type="entry name" value="Cytochrome_b_C_euk/bac"/>
</dbReference>
<dbReference type="InterPro" id="IPR048259">
    <property type="entry name" value="Cytochrome_b_N_euk/bac"/>
</dbReference>
<dbReference type="InterPro" id="IPR016174">
    <property type="entry name" value="Di-haem_cyt_TM"/>
</dbReference>
<dbReference type="PANTHER" id="PTHR19271">
    <property type="entry name" value="CYTOCHROME B"/>
    <property type="match status" value="1"/>
</dbReference>
<dbReference type="PANTHER" id="PTHR19271:SF16">
    <property type="entry name" value="CYTOCHROME B"/>
    <property type="match status" value="1"/>
</dbReference>
<dbReference type="Pfam" id="PF00032">
    <property type="entry name" value="Cytochrom_B_C"/>
    <property type="match status" value="1"/>
</dbReference>
<dbReference type="Pfam" id="PF00033">
    <property type="entry name" value="Cytochrome_B"/>
    <property type="match status" value="1"/>
</dbReference>
<dbReference type="PIRSF" id="PIRSF038885">
    <property type="entry name" value="COB"/>
    <property type="match status" value="1"/>
</dbReference>
<dbReference type="SUPFAM" id="SSF81648">
    <property type="entry name" value="a domain/subunit of cytochrome bc1 complex (Ubiquinol-cytochrome c reductase)"/>
    <property type="match status" value="1"/>
</dbReference>
<dbReference type="SUPFAM" id="SSF81342">
    <property type="entry name" value="Transmembrane di-heme cytochromes"/>
    <property type="match status" value="1"/>
</dbReference>
<dbReference type="PROSITE" id="PS51003">
    <property type="entry name" value="CYTB_CTER"/>
    <property type="match status" value="1"/>
</dbReference>
<dbReference type="PROSITE" id="PS51002">
    <property type="entry name" value="CYTB_NTER"/>
    <property type="match status" value="1"/>
</dbReference>
<accession>Q9G3N1</accession>
<accession>Q9G3N0</accession>
<geneLocation type="mitochondrion"/>
<comment type="function">
    <text evidence="2">Component of the ubiquinol-cytochrome c reductase complex (complex III or cytochrome b-c1 complex) that is part of the mitochondrial respiratory chain. The b-c1 complex mediates electron transfer from ubiquinol to cytochrome c. Contributes to the generation of a proton gradient across the mitochondrial membrane that is then used for ATP synthesis.</text>
</comment>
<comment type="cofactor">
    <cofactor evidence="2">
        <name>heme b</name>
        <dbReference type="ChEBI" id="CHEBI:60344"/>
    </cofactor>
    <text evidence="2">Binds 2 heme b groups non-covalently.</text>
</comment>
<comment type="subunit">
    <text evidence="2">The cytochrome bc1 complex contains 11 subunits: 3 respiratory subunits (MT-CYB, CYC1 and UQCRFS1), 2 core proteins (UQCRC1 and UQCRC2) and 6 low-molecular weight proteins (UQCRH/QCR6, UQCRB/QCR7, UQCRQ/QCR8, UQCR10/QCR9, UQCR11/QCR10 and a cleavage product of UQCRFS1). This cytochrome bc1 complex then forms a dimer.</text>
</comment>
<comment type="subcellular location">
    <subcellularLocation>
        <location evidence="2">Mitochondrion inner membrane</location>
        <topology evidence="2">Multi-pass membrane protein</topology>
    </subcellularLocation>
</comment>
<comment type="miscellaneous">
    <text evidence="1">Heme 1 (or BL or b562) is low-potential and absorbs at about 562 nm, and heme 2 (or BH or b566) is high-potential and absorbs at about 566 nm.</text>
</comment>
<comment type="similarity">
    <text evidence="3 4">Belongs to the cytochrome b family.</text>
</comment>
<comment type="caution">
    <text evidence="2">The full-length protein contains only eight transmembrane helices, not nine as predicted by bioinformatics tools.</text>
</comment>
<reference key="1">
    <citation type="submission" date="2000-12" db="EMBL/GenBank/DDBJ databases">
        <title>Phylogeny and systematics of myospalacinae (rodentia) inferred from mitochondrial genes sequences.</title>
        <authorList>
            <person name="Zhou C.Q."/>
            <person name="Zhou K.Y."/>
            <person name="Wang Y.Q."/>
            <person name="Zhang S.L."/>
        </authorList>
    </citation>
    <scope>NUCLEOTIDE SEQUENCE [GENOMIC DNA]</scope>
</reference>
<name>CYB_MYOPS</name>
<evidence type="ECO:0000250" key="1"/>
<evidence type="ECO:0000250" key="2">
    <source>
        <dbReference type="UniProtKB" id="P00157"/>
    </source>
</evidence>
<evidence type="ECO:0000255" key="3">
    <source>
        <dbReference type="PROSITE-ProRule" id="PRU00967"/>
    </source>
</evidence>
<evidence type="ECO:0000255" key="4">
    <source>
        <dbReference type="PROSITE-ProRule" id="PRU00968"/>
    </source>
</evidence>
<gene>
    <name type="primary">MT-CYB</name>
    <name type="synonym">COB</name>
    <name type="synonym">CYTB</name>
    <name type="synonym">MTCYB</name>
</gene>
<feature type="chain" id="PRO_0000255100" description="Cytochrome b">
    <location>
        <begin position="1"/>
        <end position="379"/>
    </location>
</feature>
<feature type="transmembrane region" description="Helical" evidence="2">
    <location>
        <begin position="33"/>
        <end position="53"/>
    </location>
</feature>
<feature type="transmembrane region" description="Helical" evidence="2">
    <location>
        <begin position="77"/>
        <end position="98"/>
    </location>
</feature>
<feature type="transmembrane region" description="Helical" evidence="2">
    <location>
        <begin position="113"/>
        <end position="133"/>
    </location>
</feature>
<feature type="transmembrane region" description="Helical" evidence="2">
    <location>
        <begin position="178"/>
        <end position="198"/>
    </location>
</feature>
<feature type="transmembrane region" description="Helical" evidence="2">
    <location>
        <begin position="226"/>
        <end position="246"/>
    </location>
</feature>
<feature type="transmembrane region" description="Helical" evidence="2">
    <location>
        <begin position="288"/>
        <end position="308"/>
    </location>
</feature>
<feature type="transmembrane region" description="Helical" evidence="2">
    <location>
        <begin position="320"/>
        <end position="340"/>
    </location>
</feature>
<feature type="transmembrane region" description="Helical" evidence="2">
    <location>
        <begin position="347"/>
        <end position="367"/>
    </location>
</feature>
<feature type="binding site" description="axial binding residue" evidence="2">
    <location>
        <position position="83"/>
    </location>
    <ligand>
        <name>heme b</name>
        <dbReference type="ChEBI" id="CHEBI:60344"/>
        <label>b562</label>
    </ligand>
    <ligandPart>
        <name>Fe</name>
        <dbReference type="ChEBI" id="CHEBI:18248"/>
    </ligandPart>
</feature>
<feature type="binding site" description="axial binding residue" evidence="2">
    <location>
        <position position="97"/>
    </location>
    <ligand>
        <name>heme b</name>
        <dbReference type="ChEBI" id="CHEBI:60344"/>
        <label>b566</label>
    </ligand>
    <ligandPart>
        <name>Fe</name>
        <dbReference type="ChEBI" id="CHEBI:18248"/>
    </ligandPart>
</feature>
<feature type="binding site" description="axial binding residue" evidence="2">
    <location>
        <position position="182"/>
    </location>
    <ligand>
        <name>heme b</name>
        <dbReference type="ChEBI" id="CHEBI:60344"/>
        <label>b562</label>
    </ligand>
    <ligandPart>
        <name>Fe</name>
        <dbReference type="ChEBI" id="CHEBI:18248"/>
    </ligandPart>
</feature>
<feature type="binding site" description="axial binding residue" evidence="2">
    <location>
        <position position="196"/>
    </location>
    <ligand>
        <name>heme b</name>
        <dbReference type="ChEBI" id="CHEBI:60344"/>
        <label>b566</label>
    </ligand>
    <ligandPart>
        <name>Fe</name>
        <dbReference type="ChEBI" id="CHEBI:18248"/>
    </ligandPart>
</feature>
<feature type="binding site" evidence="2">
    <location>
        <position position="201"/>
    </location>
    <ligand>
        <name>a ubiquinone</name>
        <dbReference type="ChEBI" id="CHEBI:16389"/>
    </ligand>
</feature>
<feature type="sequence variant" description="In strain: Isolate 2.">
    <original>I</original>
    <variation>L</variation>
    <location>
        <position position="82"/>
    </location>
</feature>
<feature type="sequence variant" description="In strain: Isolate 2.">
    <original>D</original>
    <variation>G</variation>
    <location>
        <position position="228"/>
    </location>
</feature>